<gene>
    <name type="primary">TMEM45B</name>
</gene>
<feature type="chain" id="PRO_0000271198" description="Transmembrane protein 45B">
    <location>
        <begin position="1"/>
        <end position="276"/>
    </location>
</feature>
<feature type="transmembrane region" description="Helical" evidence="4">
    <location>
        <begin position="7"/>
        <end position="27"/>
    </location>
</feature>
<feature type="transmembrane region" description="Helical" evidence="4">
    <location>
        <begin position="48"/>
        <end position="68"/>
    </location>
</feature>
<feature type="transmembrane region" description="Helical" evidence="4">
    <location>
        <begin position="95"/>
        <end position="115"/>
    </location>
</feature>
<feature type="transmembrane region" description="Helical" evidence="4">
    <location>
        <begin position="147"/>
        <end position="167"/>
    </location>
</feature>
<feature type="transmembrane region" description="Helical" evidence="4">
    <location>
        <begin position="181"/>
        <end position="201"/>
    </location>
</feature>
<feature type="transmembrane region" description="Helical" evidence="4">
    <location>
        <begin position="213"/>
        <end position="233"/>
    </location>
</feature>
<feature type="modified residue" description="Phosphoserine" evidence="1">
    <location>
        <position position="271"/>
    </location>
</feature>
<feature type="modified residue" description="Phosphoserine" evidence="2">
    <location>
        <position position="273"/>
    </location>
</feature>
<protein>
    <recommendedName>
        <fullName>Transmembrane protein 45B</fullName>
    </recommendedName>
</protein>
<evidence type="ECO:0000250" key="1">
    <source>
        <dbReference type="UniProtKB" id="Q497B2"/>
    </source>
</evidence>
<evidence type="ECO:0000250" key="2">
    <source>
        <dbReference type="UniProtKB" id="Q8VCZ2"/>
    </source>
</evidence>
<evidence type="ECO:0000250" key="3">
    <source>
        <dbReference type="UniProtKB" id="Q96B21"/>
    </source>
</evidence>
<evidence type="ECO:0000255" key="4"/>
<evidence type="ECO:0000305" key="5"/>
<accession>Q3T130</accession>
<comment type="function">
    <text evidence="3">Plays a role in innate immunity.</text>
</comment>
<comment type="subcellular location">
    <subcellularLocation>
        <location evidence="3">Endosome membrane</location>
        <topology evidence="3">Multi-pass membrane protein</topology>
    </subcellularLocation>
    <subcellularLocation>
        <location evidence="3">Lysosome membrane</location>
        <topology evidence="3">Multi-pass membrane protein</topology>
    </subcellularLocation>
    <subcellularLocation>
        <location evidence="3">Golgi apparatus</location>
        <location evidence="3">trans-Golgi network membrane</location>
        <topology evidence="3">Multi-pass membrane protein</topology>
    </subcellularLocation>
</comment>
<comment type="similarity">
    <text evidence="5">Belongs to the TMEM45 family.</text>
</comment>
<organism>
    <name type="scientific">Bos taurus</name>
    <name type="common">Bovine</name>
    <dbReference type="NCBI Taxonomy" id="9913"/>
    <lineage>
        <taxon>Eukaryota</taxon>
        <taxon>Metazoa</taxon>
        <taxon>Chordata</taxon>
        <taxon>Craniata</taxon>
        <taxon>Vertebrata</taxon>
        <taxon>Euteleostomi</taxon>
        <taxon>Mammalia</taxon>
        <taxon>Eutheria</taxon>
        <taxon>Laurasiatheria</taxon>
        <taxon>Artiodactyla</taxon>
        <taxon>Ruminantia</taxon>
        <taxon>Pecora</taxon>
        <taxon>Bovidae</taxon>
        <taxon>Bovinae</taxon>
        <taxon>Bos</taxon>
    </lineage>
</organism>
<dbReference type="EMBL" id="BC102148">
    <property type="protein sequence ID" value="AAI02149.1"/>
    <property type="molecule type" value="mRNA"/>
</dbReference>
<dbReference type="RefSeq" id="NP_001029547.1">
    <property type="nucleotide sequence ID" value="NM_001034375.2"/>
</dbReference>
<dbReference type="RefSeq" id="XP_005226905.1">
    <property type="nucleotide sequence ID" value="XM_005226848.5"/>
</dbReference>
<dbReference type="SMR" id="Q3T130"/>
<dbReference type="FunCoup" id="Q3T130">
    <property type="interactions" value="50"/>
</dbReference>
<dbReference type="STRING" id="9913.ENSBTAP00000073149"/>
<dbReference type="PaxDb" id="9913-ENSBTAP00000023404"/>
<dbReference type="Ensembl" id="ENSBTAT00000023404.6">
    <property type="protein sequence ID" value="ENSBTAP00000023404.5"/>
    <property type="gene ID" value="ENSBTAG00000017602.7"/>
</dbReference>
<dbReference type="GeneID" id="510305"/>
<dbReference type="KEGG" id="bta:510305"/>
<dbReference type="CTD" id="120224"/>
<dbReference type="VEuPathDB" id="HostDB:ENSBTAG00000017602"/>
<dbReference type="VGNC" id="VGNC:36089">
    <property type="gene designation" value="TMEM45B"/>
</dbReference>
<dbReference type="eggNOG" id="ENOG502QU0J">
    <property type="taxonomic scope" value="Eukaryota"/>
</dbReference>
<dbReference type="GeneTree" id="ENSGT00940000157181"/>
<dbReference type="HOGENOM" id="CLU_059568_0_0_1"/>
<dbReference type="InParanoid" id="Q3T130"/>
<dbReference type="OMA" id="SWYLSAT"/>
<dbReference type="OrthoDB" id="551896at2759"/>
<dbReference type="TreeFam" id="TF328673"/>
<dbReference type="Proteomes" id="UP000009136">
    <property type="component" value="Chromosome 29"/>
</dbReference>
<dbReference type="Bgee" id="ENSBTAG00000017602">
    <property type="expression patterns" value="Expressed in rumen papilla and 59 other cell types or tissues"/>
</dbReference>
<dbReference type="GO" id="GO:0010008">
    <property type="term" value="C:endosome membrane"/>
    <property type="evidence" value="ECO:0007669"/>
    <property type="project" value="UniProtKB-SubCell"/>
</dbReference>
<dbReference type="GO" id="GO:0005794">
    <property type="term" value="C:Golgi apparatus"/>
    <property type="evidence" value="ECO:0007669"/>
    <property type="project" value="UniProtKB-SubCell"/>
</dbReference>
<dbReference type="GO" id="GO:0005765">
    <property type="term" value="C:lysosomal membrane"/>
    <property type="evidence" value="ECO:0007669"/>
    <property type="project" value="UniProtKB-SubCell"/>
</dbReference>
<dbReference type="GO" id="GO:0045087">
    <property type="term" value="P:innate immune response"/>
    <property type="evidence" value="ECO:0007669"/>
    <property type="project" value="UniProtKB-KW"/>
</dbReference>
<dbReference type="InterPro" id="IPR006904">
    <property type="entry name" value="DUF716"/>
</dbReference>
<dbReference type="InterPro" id="IPR042127">
    <property type="entry name" value="TMEM45"/>
</dbReference>
<dbReference type="PANTHER" id="PTHR16007">
    <property type="entry name" value="EPIDIDYMAL MEMBRANE PROTEIN E9-RELATED"/>
    <property type="match status" value="1"/>
</dbReference>
<dbReference type="PANTHER" id="PTHR16007:SF59">
    <property type="entry name" value="TRANSMEMBRANE PROTEIN 45B"/>
    <property type="match status" value="1"/>
</dbReference>
<dbReference type="Pfam" id="PF04819">
    <property type="entry name" value="DUF716"/>
    <property type="match status" value="1"/>
</dbReference>
<name>TM45B_BOVIN</name>
<reference key="1">
    <citation type="submission" date="2005-08" db="EMBL/GenBank/DDBJ databases">
        <authorList>
            <consortium name="NIH - Mammalian Gene Collection (MGC) project"/>
        </authorList>
    </citation>
    <scope>NUCLEOTIDE SEQUENCE [LARGE SCALE MRNA]</scope>
    <source>
        <strain>Crossbred X Angus</strain>
        <tissue>Ileum</tissue>
    </source>
</reference>
<proteinExistence type="evidence at transcript level"/>
<sequence length="276" mass="32206">MANFKGHALPGSFFLIVGLWWSLKYPLKYFYQKEKSNQLTHHYQRLEIIEAAIRTLFAVIGILVEQFVPDGPHLHLYHEDHWVKLMNWQHSTMYLFFAVSGIMDMLTYLITHVPLGLDRLVMALAAFNEGFLFYYHVRDRPPLDQHIHSLLLYTVFGGALSLAVEVVLRDNIVLELFRTSLLLLQGTWFWQIGFVLFPPFGGPEWDQNSHDNIMFVTMCFCWHYLAALCILAASYSLVYCFLTRVKRPEDREVIGIQKLRSDHTYRKALLSGSDEE</sequence>
<keyword id="KW-0967">Endosome</keyword>
<keyword id="KW-0333">Golgi apparatus</keyword>
<keyword id="KW-0391">Immunity</keyword>
<keyword id="KW-0399">Innate immunity</keyword>
<keyword id="KW-0458">Lysosome</keyword>
<keyword id="KW-0472">Membrane</keyword>
<keyword id="KW-0597">Phosphoprotein</keyword>
<keyword id="KW-1185">Reference proteome</keyword>
<keyword id="KW-0812">Transmembrane</keyword>
<keyword id="KW-1133">Transmembrane helix</keyword>